<organism>
    <name type="scientific">Clostridium botulinum (strain Alaska E43 / Type E3)</name>
    <dbReference type="NCBI Taxonomy" id="508767"/>
    <lineage>
        <taxon>Bacteria</taxon>
        <taxon>Bacillati</taxon>
        <taxon>Bacillota</taxon>
        <taxon>Clostridia</taxon>
        <taxon>Eubacteriales</taxon>
        <taxon>Clostridiaceae</taxon>
        <taxon>Clostridium</taxon>
    </lineage>
</organism>
<sequence length="391" mass="43124">MKRLFTSESVTEGHPDKMCDQISDAILDAILAKDSNARVACETCTTTGLVMVMGEISTNCYVDIPKVVRETVREIGYDRAKYGFDCDTCSVMTTIDEQSADIAMGVDEALESKKGQKDEVEAVGAGDQGMMFGFATNETDAYMPLPIYMAHKLSRRLTEVRKDGTLDYLRPDGKTQVTVEYENNKPKRIDTIVISTQHGEEVSLETIEKDIKEHVINAVVPAELLDAETRYFINPTGRFVVGGPQGDSGLTGRKIIVDTYGGYGRHGGGAFSGKDSTKVDRSAAYAARWVAKNLVAAGIADKLEIQLAYAIGVAKPVSIEIETFGTGKMPEDKIVEIVEKVFDLRPGAIIRDLDLRKPIFKQTAAYGHFGRTDLDLPWERLNKIEEIKKYI</sequence>
<feature type="chain" id="PRO_1000093036" description="S-adenosylmethionine synthase">
    <location>
        <begin position="1"/>
        <end position="391"/>
    </location>
</feature>
<feature type="region of interest" description="Flexible loop" evidence="1">
    <location>
        <begin position="98"/>
        <end position="108"/>
    </location>
</feature>
<feature type="binding site" description="in other chain" evidence="1">
    <location>
        <position position="14"/>
    </location>
    <ligand>
        <name>ATP</name>
        <dbReference type="ChEBI" id="CHEBI:30616"/>
        <note>ligand shared between two neighboring subunits</note>
    </ligand>
</feature>
<feature type="binding site" evidence="1">
    <location>
        <position position="16"/>
    </location>
    <ligand>
        <name>Mg(2+)</name>
        <dbReference type="ChEBI" id="CHEBI:18420"/>
    </ligand>
</feature>
<feature type="binding site" evidence="1">
    <location>
        <position position="42"/>
    </location>
    <ligand>
        <name>K(+)</name>
        <dbReference type="ChEBI" id="CHEBI:29103"/>
    </ligand>
</feature>
<feature type="binding site" description="in other chain" evidence="1">
    <location>
        <position position="55"/>
    </location>
    <ligand>
        <name>L-methionine</name>
        <dbReference type="ChEBI" id="CHEBI:57844"/>
        <note>ligand shared between two neighboring subunits</note>
    </ligand>
</feature>
<feature type="binding site" description="in other chain" evidence="1">
    <location>
        <position position="98"/>
    </location>
    <ligand>
        <name>L-methionine</name>
        <dbReference type="ChEBI" id="CHEBI:57844"/>
        <note>ligand shared between two neighboring subunits</note>
    </ligand>
</feature>
<feature type="binding site" description="in other chain" evidence="1">
    <location>
        <begin position="172"/>
        <end position="174"/>
    </location>
    <ligand>
        <name>ATP</name>
        <dbReference type="ChEBI" id="CHEBI:30616"/>
        <note>ligand shared between two neighboring subunits</note>
    </ligand>
</feature>
<feature type="binding site" description="in other chain" evidence="1">
    <location>
        <begin position="238"/>
        <end position="239"/>
    </location>
    <ligand>
        <name>ATP</name>
        <dbReference type="ChEBI" id="CHEBI:30616"/>
        <note>ligand shared between two neighboring subunits</note>
    </ligand>
</feature>
<feature type="binding site" evidence="1">
    <location>
        <position position="247"/>
    </location>
    <ligand>
        <name>ATP</name>
        <dbReference type="ChEBI" id="CHEBI:30616"/>
        <note>ligand shared between two neighboring subunits</note>
    </ligand>
</feature>
<feature type="binding site" evidence="1">
    <location>
        <position position="247"/>
    </location>
    <ligand>
        <name>L-methionine</name>
        <dbReference type="ChEBI" id="CHEBI:57844"/>
        <note>ligand shared between two neighboring subunits</note>
    </ligand>
</feature>
<feature type="binding site" description="in other chain" evidence="1">
    <location>
        <begin position="253"/>
        <end position="254"/>
    </location>
    <ligand>
        <name>ATP</name>
        <dbReference type="ChEBI" id="CHEBI:30616"/>
        <note>ligand shared between two neighboring subunits</note>
    </ligand>
</feature>
<feature type="binding site" evidence="1">
    <location>
        <position position="270"/>
    </location>
    <ligand>
        <name>ATP</name>
        <dbReference type="ChEBI" id="CHEBI:30616"/>
        <note>ligand shared between two neighboring subunits</note>
    </ligand>
</feature>
<feature type="binding site" evidence="1">
    <location>
        <position position="274"/>
    </location>
    <ligand>
        <name>ATP</name>
        <dbReference type="ChEBI" id="CHEBI:30616"/>
        <note>ligand shared between two neighboring subunits</note>
    </ligand>
</feature>
<feature type="binding site" description="in other chain" evidence="1">
    <location>
        <position position="278"/>
    </location>
    <ligand>
        <name>L-methionine</name>
        <dbReference type="ChEBI" id="CHEBI:57844"/>
        <note>ligand shared between two neighboring subunits</note>
    </ligand>
</feature>
<accession>B2UZL0</accession>
<protein>
    <recommendedName>
        <fullName evidence="1">S-adenosylmethionine synthase</fullName>
        <shortName evidence="1">AdoMet synthase</shortName>
        <ecNumber evidence="1">2.5.1.6</ecNumber>
    </recommendedName>
    <alternativeName>
        <fullName evidence="1">MAT</fullName>
    </alternativeName>
    <alternativeName>
        <fullName evidence="1">Methionine adenosyltransferase</fullName>
    </alternativeName>
</protein>
<keyword id="KW-0067">ATP-binding</keyword>
<keyword id="KW-0963">Cytoplasm</keyword>
<keyword id="KW-0460">Magnesium</keyword>
<keyword id="KW-0479">Metal-binding</keyword>
<keyword id="KW-0547">Nucleotide-binding</keyword>
<keyword id="KW-0554">One-carbon metabolism</keyword>
<keyword id="KW-0630">Potassium</keyword>
<keyword id="KW-0808">Transferase</keyword>
<comment type="function">
    <text evidence="1">Catalyzes the formation of S-adenosylmethionine (AdoMet) from methionine and ATP. The overall synthetic reaction is composed of two sequential steps, AdoMet formation and the subsequent tripolyphosphate hydrolysis which occurs prior to release of AdoMet from the enzyme.</text>
</comment>
<comment type="catalytic activity">
    <reaction evidence="1">
        <text>L-methionine + ATP + H2O = S-adenosyl-L-methionine + phosphate + diphosphate</text>
        <dbReference type="Rhea" id="RHEA:21080"/>
        <dbReference type="ChEBI" id="CHEBI:15377"/>
        <dbReference type="ChEBI" id="CHEBI:30616"/>
        <dbReference type="ChEBI" id="CHEBI:33019"/>
        <dbReference type="ChEBI" id="CHEBI:43474"/>
        <dbReference type="ChEBI" id="CHEBI:57844"/>
        <dbReference type="ChEBI" id="CHEBI:59789"/>
        <dbReference type="EC" id="2.5.1.6"/>
    </reaction>
</comment>
<comment type="cofactor">
    <cofactor evidence="1">
        <name>Mg(2+)</name>
        <dbReference type="ChEBI" id="CHEBI:18420"/>
    </cofactor>
    <text evidence="1">Binds 2 divalent ions per subunit.</text>
</comment>
<comment type="cofactor">
    <cofactor evidence="1">
        <name>K(+)</name>
        <dbReference type="ChEBI" id="CHEBI:29103"/>
    </cofactor>
    <text evidence="1">Binds 1 potassium ion per subunit.</text>
</comment>
<comment type="pathway">
    <text evidence="1">Amino-acid biosynthesis; S-adenosyl-L-methionine biosynthesis; S-adenosyl-L-methionine from L-methionine: step 1/1.</text>
</comment>
<comment type="subunit">
    <text evidence="1">Homotetramer; dimer of dimers.</text>
</comment>
<comment type="subcellular location">
    <subcellularLocation>
        <location evidence="1">Cytoplasm</location>
    </subcellularLocation>
</comment>
<comment type="similarity">
    <text evidence="1">Belongs to the AdoMet synthase family.</text>
</comment>
<proteinExistence type="inferred from homology"/>
<evidence type="ECO:0000255" key="1">
    <source>
        <dbReference type="HAMAP-Rule" id="MF_00086"/>
    </source>
</evidence>
<reference key="1">
    <citation type="submission" date="2008-05" db="EMBL/GenBank/DDBJ databases">
        <title>Complete genome sequence of Clostridium botulinum E3 str. Alaska E43.</title>
        <authorList>
            <person name="Brinkac L.M."/>
            <person name="Brown J.L."/>
            <person name="Bruce D."/>
            <person name="Detter C."/>
            <person name="Munk C."/>
            <person name="Smith L.A."/>
            <person name="Smith T.J."/>
            <person name="Sutton G."/>
            <person name="Brettin T.S."/>
        </authorList>
    </citation>
    <scope>NUCLEOTIDE SEQUENCE [LARGE SCALE GENOMIC DNA]</scope>
    <source>
        <strain>Alaska E43 / Type E3</strain>
    </source>
</reference>
<dbReference type="EC" id="2.5.1.6" evidence="1"/>
<dbReference type="EMBL" id="CP001078">
    <property type="protein sequence ID" value="ACD53718.1"/>
    <property type="molecule type" value="Genomic_DNA"/>
</dbReference>
<dbReference type="RefSeq" id="WP_012451566.1">
    <property type="nucleotide sequence ID" value="NC_010723.1"/>
</dbReference>
<dbReference type="SMR" id="B2UZL0"/>
<dbReference type="KEGG" id="cbt:CLH_0507"/>
<dbReference type="HOGENOM" id="CLU_041802_1_1_9"/>
<dbReference type="UniPathway" id="UPA00315">
    <property type="reaction ID" value="UER00080"/>
</dbReference>
<dbReference type="GO" id="GO:0005737">
    <property type="term" value="C:cytoplasm"/>
    <property type="evidence" value="ECO:0007669"/>
    <property type="project" value="UniProtKB-SubCell"/>
</dbReference>
<dbReference type="GO" id="GO:0005524">
    <property type="term" value="F:ATP binding"/>
    <property type="evidence" value="ECO:0007669"/>
    <property type="project" value="UniProtKB-UniRule"/>
</dbReference>
<dbReference type="GO" id="GO:0000287">
    <property type="term" value="F:magnesium ion binding"/>
    <property type="evidence" value="ECO:0007669"/>
    <property type="project" value="UniProtKB-UniRule"/>
</dbReference>
<dbReference type="GO" id="GO:0004478">
    <property type="term" value="F:methionine adenosyltransferase activity"/>
    <property type="evidence" value="ECO:0007669"/>
    <property type="project" value="UniProtKB-UniRule"/>
</dbReference>
<dbReference type="GO" id="GO:0006730">
    <property type="term" value="P:one-carbon metabolic process"/>
    <property type="evidence" value="ECO:0007669"/>
    <property type="project" value="UniProtKB-KW"/>
</dbReference>
<dbReference type="GO" id="GO:0006556">
    <property type="term" value="P:S-adenosylmethionine biosynthetic process"/>
    <property type="evidence" value="ECO:0007669"/>
    <property type="project" value="UniProtKB-UniRule"/>
</dbReference>
<dbReference type="CDD" id="cd18079">
    <property type="entry name" value="S-AdoMet_synt"/>
    <property type="match status" value="1"/>
</dbReference>
<dbReference type="FunFam" id="3.30.300.10:FF:000003">
    <property type="entry name" value="S-adenosylmethionine synthase"/>
    <property type="match status" value="1"/>
</dbReference>
<dbReference type="FunFam" id="3.30.300.10:FF:000004">
    <property type="entry name" value="S-adenosylmethionine synthase"/>
    <property type="match status" value="1"/>
</dbReference>
<dbReference type="Gene3D" id="3.30.300.10">
    <property type="match status" value="3"/>
</dbReference>
<dbReference type="HAMAP" id="MF_00086">
    <property type="entry name" value="S_AdoMet_synth1"/>
    <property type="match status" value="1"/>
</dbReference>
<dbReference type="InterPro" id="IPR022631">
    <property type="entry name" value="ADOMET_SYNTHASE_CS"/>
</dbReference>
<dbReference type="InterPro" id="IPR022630">
    <property type="entry name" value="S-AdoMet_synt_C"/>
</dbReference>
<dbReference type="InterPro" id="IPR022629">
    <property type="entry name" value="S-AdoMet_synt_central"/>
</dbReference>
<dbReference type="InterPro" id="IPR022628">
    <property type="entry name" value="S-AdoMet_synt_N"/>
</dbReference>
<dbReference type="InterPro" id="IPR002133">
    <property type="entry name" value="S-AdoMet_synthetase"/>
</dbReference>
<dbReference type="InterPro" id="IPR022636">
    <property type="entry name" value="S-AdoMet_synthetase_sfam"/>
</dbReference>
<dbReference type="NCBIfam" id="TIGR01034">
    <property type="entry name" value="metK"/>
    <property type="match status" value="1"/>
</dbReference>
<dbReference type="PANTHER" id="PTHR11964">
    <property type="entry name" value="S-ADENOSYLMETHIONINE SYNTHETASE"/>
    <property type="match status" value="1"/>
</dbReference>
<dbReference type="Pfam" id="PF02773">
    <property type="entry name" value="S-AdoMet_synt_C"/>
    <property type="match status" value="1"/>
</dbReference>
<dbReference type="Pfam" id="PF02772">
    <property type="entry name" value="S-AdoMet_synt_M"/>
    <property type="match status" value="1"/>
</dbReference>
<dbReference type="Pfam" id="PF00438">
    <property type="entry name" value="S-AdoMet_synt_N"/>
    <property type="match status" value="1"/>
</dbReference>
<dbReference type="PIRSF" id="PIRSF000497">
    <property type="entry name" value="MAT"/>
    <property type="match status" value="1"/>
</dbReference>
<dbReference type="SUPFAM" id="SSF55973">
    <property type="entry name" value="S-adenosylmethionine synthetase"/>
    <property type="match status" value="3"/>
</dbReference>
<dbReference type="PROSITE" id="PS00376">
    <property type="entry name" value="ADOMET_SYNTHASE_1"/>
    <property type="match status" value="1"/>
</dbReference>
<dbReference type="PROSITE" id="PS00377">
    <property type="entry name" value="ADOMET_SYNTHASE_2"/>
    <property type="match status" value="1"/>
</dbReference>
<gene>
    <name evidence="1" type="primary">metK</name>
    <name type="ordered locus">CLH_0507</name>
</gene>
<name>METK_CLOBA</name>